<accession>B9DM18</accession>
<gene>
    <name evidence="1" type="primary">rplD</name>
    <name type="ordered locus">Sca_1734</name>
</gene>
<proteinExistence type="inferred from homology"/>
<evidence type="ECO:0000255" key="1">
    <source>
        <dbReference type="HAMAP-Rule" id="MF_01328"/>
    </source>
</evidence>
<evidence type="ECO:0000256" key="2">
    <source>
        <dbReference type="SAM" id="MobiDB-lite"/>
    </source>
</evidence>
<evidence type="ECO:0000305" key="3"/>
<comment type="function">
    <text evidence="1">One of the primary rRNA binding proteins, this protein initially binds near the 5'-end of the 23S rRNA. It is important during the early stages of 50S assembly. It makes multiple contacts with different domains of the 23S rRNA in the assembled 50S subunit and ribosome.</text>
</comment>
<comment type="function">
    <text evidence="1">Forms part of the polypeptide exit tunnel.</text>
</comment>
<comment type="subunit">
    <text evidence="1">Part of the 50S ribosomal subunit.</text>
</comment>
<comment type="similarity">
    <text evidence="1">Belongs to the universal ribosomal protein uL4 family.</text>
</comment>
<name>RL4_STACT</name>
<protein>
    <recommendedName>
        <fullName evidence="1">Large ribosomal subunit protein uL4</fullName>
    </recommendedName>
    <alternativeName>
        <fullName evidence="3">50S ribosomal protein L4</fullName>
    </alternativeName>
</protein>
<organism>
    <name type="scientific">Staphylococcus carnosus (strain TM300)</name>
    <dbReference type="NCBI Taxonomy" id="396513"/>
    <lineage>
        <taxon>Bacteria</taxon>
        <taxon>Bacillati</taxon>
        <taxon>Bacillota</taxon>
        <taxon>Bacilli</taxon>
        <taxon>Bacillales</taxon>
        <taxon>Staphylococcaceae</taxon>
        <taxon>Staphylococcus</taxon>
    </lineage>
</organism>
<sequence length="207" mass="22525">MANYDVLKVDGSKAGSVELSDSVFAIEPNKDVIFEAINLQRASLRQGTHSVKNRSAVRGGGRKPWRQKGTGRARQGTIRAPQWRGGGIVFGPTPRSYSYKMPKKMRRLALRSALSFKVQENGFTVVDAFGLEAPKTKEFTKVLSNLELPKKVLVVTESEDVNVELSARNIPGVQITTVTGLNVLDITSADSVLITEAAAKKVEEVLG</sequence>
<keyword id="KW-1185">Reference proteome</keyword>
<keyword id="KW-0687">Ribonucleoprotein</keyword>
<keyword id="KW-0689">Ribosomal protein</keyword>
<keyword id="KW-0694">RNA-binding</keyword>
<keyword id="KW-0699">rRNA-binding</keyword>
<dbReference type="EMBL" id="AM295250">
    <property type="protein sequence ID" value="CAL28640.1"/>
    <property type="molecule type" value="Genomic_DNA"/>
</dbReference>
<dbReference type="RefSeq" id="WP_015900976.1">
    <property type="nucleotide sequence ID" value="NC_012121.1"/>
</dbReference>
<dbReference type="SMR" id="B9DM18"/>
<dbReference type="GeneID" id="93794193"/>
<dbReference type="KEGG" id="sca:SCA_1734"/>
<dbReference type="eggNOG" id="COG0088">
    <property type="taxonomic scope" value="Bacteria"/>
</dbReference>
<dbReference type="HOGENOM" id="CLU_041575_5_2_9"/>
<dbReference type="OrthoDB" id="9803201at2"/>
<dbReference type="BioCyc" id="SCAR396513:SCA_RS08835-MONOMER"/>
<dbReference type="Proteomes" id="UP000000444">
    <property type="component" value="Chromosome"/>
</dbReference>
<dbReference type="GO" id="GO:1990904">
    <property type="term" value="C:ribonucleoprotein complex"/>
    <property type="evidence" value="ECO:0007669"/>
    <property type="project" value="UniProtKB-KW"/>
</dbReference>
<dbReference type="GO" id="GO:0005840">
    <property type="term" value="C:ribosome"/>
    <property type="evidence" value="ECO:0007669"/>
    <property type="project" value="UniProtKB-KW"/>
</dbReference>
<dbReference type="GO" id="GO:0019843">
    <property type="term" value="F:rRNA binding"/>
    <property type="evidence" value="ECO:0007669"/>
    <property type="project" value="UniProtKB-UniRule"/>
</dbReference>
<dbReference type="GO" id="GO:0003735">
    <property type="term" value="F:structural constituent of ribosome"/>
    <property type="evidence" value="ECO:0007669"/>
    <property type="project" value="InterPro"/>
</dbReference>
<dbReference type="GO" id="GO:0006412">
    <property type="term" value="P:translation"/>
    <property type="evidence" value="ECO:0007669"/>
    <property type="project" value="UniProtKB-UniRule"/>
</dbReference>
<dbReference type="FunFam" id="3.40.1370.10:FF:000003">
    <property type="entry name" value="50S ribosomal protein L4"/>
    <property type="match status" value="1"/>
</dbReference>
<dbReference type="Gene3D" id="3.40.1370.10">
    <property type="match status" value="1"/>
</dbReference>
<dbReference type="HAMAP" id="MF_01328_B">
    <property type="entry name" value="Ribosomal_uL4_B"/>
    <property type="match status" value="1"/>
</dbReference>
<dbReference type="InterPro" id="IPR002136">
    <property type="entry name" value="Ribosomal_uL4"/>
</dbReference>
<dbReference type="InterPro" id="IPR013005">
    <property type="entry name" value="Ribosomal_uL4-like"/>
</dbReference>
<dbReference type="InterPro" id="IPR023574">
    <property type="entry name" value="Ribosomal_uL4_dom_sf"/>
</dbReference>
<dbReference type="NCBIfam" id="TIGR03953">
    <property type="entry name" value="rplD_bact"/>
    <property type="match status" value="1"/>
</dbReference>
<dbReference type="PANTHER" id="PTHR10746">
    <property type="entry name" value="50S RIBOSOMAL PROTEIN L4"/>
    <property type="match status" value="1"/>
</dbReference>
<dbReference type="PANTHER" id="PTHR10746:SF6">
    <property type="entry name" value="LARGE RIBOSOMAL SUBUNIT PROTEIN UL4M"/>
    <property type="match status" value="1"/>
</dbReference>
<dbReference type="Pfam" id="PF00573">
    <property type="entry name" value="Ribosomal_L4"/>
    <property type="match status" value="1"/>
</dbReference>
<dbReference type="SUPFAM" id="SSF52166">
    <property type="entry name" value="Ribosomal protein L4"/>
    <property type="match status" value="1"/>
</dbReference>
<reference key="1">
    <citation type="journal article" date="2009" name="Appl. Environ. Microbiol.">
        <title>Genome analysis of the meat starter culture bacterium Staphylococcus carnosus TM300.</title>
        <authorList>
            <person name="Rosenstein R."/>
            <person name="Nerz C."/>
            <person name="Biswas L."/>
            <person name="Resch A."/>
            <person name="Raddatz G."/>
            <person name="Schuster S.C."/>
            <person name="Goetz F."/>
        </authorList>
    </citation>
    <scope>NUCLEOTIDE SEQUENCE [LARGE SCALE GENOMIC DNA]</scope>
    <source>
        <strain>TM300</strain>
    </source>
</reference>
<feature type="chain" id="PRO_1000166024" description="Large ribosomal subunit protein uL4">
    <location>
        <begin position="1"/>
        <end position="207"/>
    </location>
</feature>
<feature type="region of interest" description="Disordered" evidence="2">
    <location>
        <begin position="48"/>
        <end position="75"/>
    </location>
</feature>
<feature type="compositionally biased region" description="Basic residues" evidence="2">
    <location>
        <begin position="60"/>
        <end position="71"/>
    </location>
</feature>